<reference key="1">
    <citation type="journal article" date="2005" name="BMC Biol.">
        <title>The sequence of rice chromosomes 11 and 12, rich in disease resistance genes and recent gene duplications.</title>
        <authorList>
            <consortium name="The rice chromosomes 11 and 12 sequencing consortia"/>
        </authorList>
    </citation>
    <scope>NUCLEOTIDE SEQUENCE [LARGE SCALE GENOMIC DNA]</scope>
    <source>
        <strain>cv. Nipponbare</strain>
    </source>
</reference>
<reference key="2">
    <citation type="journal article" date="2005" name="Nature">
        <title>The map-based sequence of the rice genome.</title>
        <authorList>
            <consortium name="International rice genome sequencing project (IRGSP)"/>
        </authorList>
    </citation>
    <scope>NUCLEOTIDE SEQUENCE [LARGE SCALE GENOMIC DNA]</scope>
    <source>
        <strain>cv. Nipponbare</strain>
    </source>
</reference>
<reference key="3">
    <citation type="journal article" date="2008" name="Nucleic Acids Res.">
        <title>The rice annotation project database (RAP-DB): 2008 update.</title>
        <authorList>
            <consortium name="The rice annotation project (RAP)"/>
        </authorList>
    </citation>
    <scope>GENOME REANNOTATION</scope>
    <source>
        <strain>cv. Nipponbare</strain>
    </source>
</reference>
<reference key="4">
    <citation type="journal article" date="2013" name="Rice">
        <title>Improvement of the Oryza sativa Nipponbare reference genome using next generation sequence and optical map data.</title>
        <authorList>
            <person name="Kawahara Y."/>
            <person name="de la Bastide M."/>
            <person name="Hamilton J.P."/>
            <person name="Kanamori H."/>
            <person name="McCombie W.R."/>
            <person name="Ouyang S."/>
            <person name="Schwartz D.C."/>
            <person name="Tanaka T."/>
            <person name="Wu J."/>
            <person name="Zhou S."/>
            <person name="Childs K.L."/>
            <person name="Davidson R.M."/>
            <person name="Lin H."/>
            <person name="Quesada-Ocampo L."/>
            <person name="Vaillancourt B."/>
            <person name="Sakai H."/>
            <person name="Lee S.S."/>
            <person name="Kim J."/>
            <person name="Numa H."/>
            <person name="Itoh T."/>
            <person name="Buell C.R."/>
            <person name="Matsumoto T."/>
        </authorList>
    </citation>
    <scope>GENOME REANNOTATION</scope>
    <source>
        <strain>cv. Nipponbare</strain>
    </source>
</reference>
<reference key="5">
    <citation type="journal article" date="2003" name="Science">
        <title>Collection, mapping, and annotation of over 28,000 cDNA clones from japonica rice.</title>
        <authorList>
            <consortium name="The rice full-length cDNA consortium"/>
        </authorList>
    </citation>
    <scope>NUCLEOTIDE SEQUENCE [LARGE SCALE MRNA]</scope>
    <source>
        <strain>cv. Nipponbare</strain>
    </source>
</reference>
<reference key="6">
    <citation type="journal article" date="2005" name="J. Exp. Bot.">
        <title>Expression of iron-acquisition-related genes in iron-deficient rice is co-ordinately induced by partially conserved iron-deficiency-responsive elements.</title>
        <authorList>
            <person name="Kobayashi T."/>
            <person name="Suzuki M."/>
            <person name="Inoue H."/>
            <person name="Itai R.N."/>
            <person name="Takahashi M."/>
            <person name="Nakanishi H."/>
            <person name="Mori S."/>
            <person name="Nishizawa N.K."/>
        </authorList>
    </citation>
    <scope>INDUCTION</scope>
</reference>
<reference key="7">
    <citation type="journal article" date="2006" name="J. Biochem. Mol. Biol.">
        <title>Molecular analyses of the metallothionein gene family in rice (Oryza sativa L.).</title>
        <authorList>
            <person name="Zhou G."/>
            <person name="Xu Y."/>
            <person name="Li J."/>
            <person name="Yang L."/>
            <person name="Liu J.-Y."/>
        </authorList>
    </citation>
    <scope>GENE FAMILY</scope>
    <scope>TISSUE SPECIFICITY</scope>
</reference>
<proteinExistence type="evidence at transcript level"/>
<protein>
    <recommendedName>
        <fullName>Metallothionein-like protein 4A</fullName>
    </recommendedName>
    <alternativeName>
        <fullName>Class I metallothionein-like protein 4A</fullName>
    </alternativeName>
    <alternativeName>
        <fullName>OsMT-I-4a</fullName>
    </alternativeName>
    <alternativeName>
        <fullName>OsMT1b</fullName>
    </alternativeName>
</protein>
<name>MT4A_ORYSJ</name>
<dbReference type="EMBL" id="DP000011">
    <property type="protein sequence ID" value="ABA99658.2"/>
    <property type="status" value="ALT_SEQ"/>
    <property type="molecule type" value="Genomic_DNA"/>
</dbReference>
<dbReference type="EMBL" id="AP008218">
    <property type="protein sequence ID" value="BAF30100.1"/>
    <property type="molecule type" value="Genomic_DNA"/>
</dbReference>
<dbReference type="EMBL" id="AP014968">
    <property type="protein sequence ID" value="BAT17737.1"/>
    <property type="molecule type" value="Genomic_DNA"/>
</dbReference>
<dbReference type="EMBL" id="AK103445">
    <property type="status" value="NOT_ANNOTATED_CDS"/>
    <property type="molecule type" value="mRNA"/>
</dbReference>
<dbReference type="RefSeq" id="XP_015618461.1">
    <property type="nucleotide sequence ID" value="XM_015762975.1"/>
</dbReference>
<dbReference type="FunCoup" id="Q0IMG5">
    <property type="interactions" value="53"/>
</dbReference>
<dbReference type="STRING" id="39947.Q0IMG5"/>
<dbReference type="PaxDb" id="39947-Q0IMG5"/>
<dbReference type="EnsemblPlants" id="Os12t0570700-01">
    <property type="protein sequence ID" value="Os12t0570700-01"/>
    <property type="gene ID" value="Os12g0570700"/>
</dbReference>
<dbReference type="Gramene" id="Os12t0570700-01">
    <property type="protein sequence ID" value="Os12t0570700-01"/>
    <property type="gene ID" value="Os12g0570700"/>
</dbReference>
<dbReference type="KEGG" id="dosa:Os12g0570700"/>
<dbReference type="eggNOG" id="ENOG502SXDI">
    <property type="taxonomic scope" value="Eukaryota"/>
</dbReference>
<dbReference type="HOGENOM" id="CLU_161105_1_0_1"/>
<dbReference type="InParanoid" id="Q0IMG5"/>
<dbReference type="OMA" id="NCSCNKY"/>
<dbReference type="OrthoDB" id="678987at2759"/>
<dbReference type="Proteomes" id="UP000000763">
    <property type="component" value="Chromosome 12"/>
</dbReference>
<dbReference type="Proteomes" id="UP000059680">
    <property type="component" value="Chromosome 12"/>
</dbReference>
<dbReference type="ExpressionAtlas" id="Q0IMG5">
    <property type="expression patterns" value="baseline and differential"/>
</dbReference>
<dbReference type="GO" id="GO:0046872">
    <property type="term" value="F:metal ion binding"/>
    <property type="evidence" value="ECO:0007669"/>
    <property type="project" value="UniProtKB-KW"/>
</dbReference>
<dbReference type="InterPro" id="IPR000347">
    <property type="entry name" value="Metalthion_15p"/>
</dbReference>
<dbReference type="PANTHER" id="PTHR33543">
    <property type="entry name" value="METALLOTHIONEIN-LIKE PROTEIN 2A"/>
    <property type="match status" value="1"/>
</dbReference>
<dbReference type="PANTHER" id="PTHR33543:SF37">
    <property type="entry name" value="METALLOTHIONEIN-LIKE PROTEIN 4B"/>
    <property type="match status" value="1"/>
</dbReference>
<dbReference type="Pfam" id="PF01439">
    <property type="entry name" value="Metallothio_2"/>
    <property type="match status" value="1"/>
</dbReference>
<gene>
    <name type="primary">MT4A</name>
    <name type="ordered locus">Os12g0570700</name>
    <name type="ordered locus">LOC_Os12g38270</name>
</gene>
<keyword id="KW-0479">Metal-binding</keyword>
<keyword id="KW-0480">Metal-thiolate cluster</keyword>
<keyword id="KW-1185">Reference proteome</keyword>
<comment type="function">
    <text evidence="3">Metallothioneins have a high content of cysteine residues that bind various heavy metals.</text>
</comment>
<comment type="tissue specificity">
    <text evidence="2">Expressed in roots.</text>
</comment>
<comment type="induction">
    <text evidence="1">By iron deficiency in roots.</text>
</comment>
<comment type="similarity">
    <text evidence="3">Belongs to the metallothionein superfamily. Type 15 family.</text>
</comment>
<comment type="sequence caution" evidence="3">
    <conflict type="erroneous gene model prediction">
        <sequence resource="EMBL-CDS" id="ABA99658"/>
    </conflict>
</comment>
<accession>Q0IMG5</accession>
<accession>Q2QNC6</accession>
<sequence length="78" mass="7644">MSCCGGSCNCGSSCKCGSGCGNMYPDLAEKTTNTSATMVLGVAPAKEQFEGVGKAAESGEAAHGCSCGSSCKCNPCNC</sequence>
<feature type="chain" id="PRO_0000263059" description="Metallothionein-like protein 4A">
    <location>
        <begin position="1"/>
        <end position="78"/>
    </location>
</feature>
<organism>
    <name type="scientific">Oryza sativa subsp. japonica</name>
    <name type="common">Rice</name>
    <dbReference type="NCBI Taxonomy" id="39947"/>
    <lineage>
        <taxon>Eukaryota</taxon>
        <taxon>Viridiplantae</taxon>
        <taxon>Streptophyta</taxon>
        <taxon>Embryophyta</taxon>
        <taxon>Tracheophyta</taxon>
        <taxon>Spermatophyta</taxon>
        <taxon>Magnoliopsida</taxon>
        <taxon>Liliopsida</taxon>
        <taxon>Poales</taxon>
        <taxon>Poaceae</taxon>
        <taxon>BOP clade</taxon>
        <taxon>Oryzoideae</taxon>
        <taxon>Oryzeae</taxon>
        <taxon>Oryzinae</taxon>
        <taxon>Oryza</taxon>
        <taxon>Oryza sativa</taxon>
    </lineage>
</organism>
<evidence type="ECO:0000269" key="1">
    <source>
    </source>
</evidence>
<evidence type="ECO:0000269" key="2">
    <source>
    </source>
</evidence>
<evidence type="ECO:0000305" key="3"/>